<gene>
    <name evidence="1" type="primary">argS</name>
    <name type="ordered locus">Ddes_0743</name>
</gene>
<sequence length="550" mass="61287">MRAIETLRTALAAIIEEEGLAWPSKTVIEPPRDPRHGDLSVNSAMLLAREAKTNPRELAQKFAARLLERCPDVEKAEAAGPGFCNVTFSQAFWRQTVTDIESAGQAYGESREPGRRVLLEYVSANPTGPLHVGHGRGAAVGDSLARLLRKAGHHVHTEYYINDAGRQMRLLGLSVWLRVLELAGRPVEWPEDYYRGDYIIDIAREMLTANPALPDMPAPEGEDLCYEKAMTDILNGIKDDLRDFRVEHLRWFSEKTLVETGAVDAAFAALGKSGYTYEQDNAFWFATEQLGDDKNRVLKKSDGSLTYFASDIAYHHDKFERGYDWLIDVWGADHHGYIPRMRAAITAMGKERDSFDVVLIQLVNLLREGQPVSMSTRAGTFETLADVIKEVGTDAARFMFLSRKSDSPLDFDLELAKQRSLDNPVYYVQYAHARICAVLRRAAERGFVLPEKSDAALLAPLDTAEDMTLLRKAAAFEDMLFAAAQSLGVHHVSHYLTELAGLLHSYYARHQVLLADDAPRTLARLALLRSVGQVVRNGLDVLGVSAPESM</sequence>
<feature type="chain" id="PRO_1000198897" description="Arginine--tRNA ligase">
    <location>
        <begin position="1"/>
        <end position="550"/>
    </location>
</feature>
<feature type="short sequence motif" description="'HIGH' region">
    <location>
        <begin position="124"/>
        <end position="134"/>
    </location>
</feature>
<proteinExistence type="inferred from homology"/>
<protein>
    <recommendedName>
        <fullName evidence="1">Arginine--tRNA ligase</fullName>
        <ecNumber evidence="1">6.1.1.19</ecNumber>
    </recommendedName>
    <alternativeName>
        <fullName evidence="1">Arginyl-tRNA synthetase</fullName>
        <shortName evidence="1">ArgRS</shortName>
    </alternativeName>
</protein>
<keyword id="KW-0030">Aminoacyl-tRNA synthetase</keyword>
<keyword id="KW-0067">ATP-binding</keyword>
<keyword id="KW-0963">Cytoplasm</keyword>
<keyword id="KW-0436">Ligase</keyword>
<keyword id="KW-0547">Nucleotide-binding</keyword>
<keyword id="KW-0648">Protein biosynthesis</keyword>
<dbReference type="EC" id="6.1.1.19" evidence="1"/>
<dbReference type="EMBL" id="CP001358">
    <property type="protein sequence ID" value="ACL48651.1"/>
    <property type="molecule type" value="Genomic_DNA"/>
</dbReference>
<dbReference type="SMR" id="B8IYS4"/>
<dbReference type="STRING" id="525146.Ddes_0743"/>
<dbReference type="KEGG" id="dds:Ddes_0743"/>
<dbReference type="eggNOG" id="COG0018">
    <property type="taxonomic scope" value="Bacteria"/>
</dbReference>
<dbReference type="HOGENOM" id="CLU_006406_0_1_7"/>
<dbReference type="GO" id="GO:0005737">
    <property type="term" value="C:cytoplasm"/>
    <property type="evidence" value="ECO:0007669"/>
    <property type="project" value="UniProtKB-SubCell"/>
</dbReference>
<dbReference type="GO" id="GO:0004814">
    <property type="term" value="F:arginine-tRNA ligase activity"/>
    <property type="evidence" value="ECO:0007669"/>
    <property type="project" value="UniProtKB-UniRule"/>
</dbReference>
<dbReference type="GO" id="GO:0005524">
    <property type="term" value="F:ATP binding"/>
    <property type="evidence" value="ECO:0007669"/>
    <property type="project" value="UniProtKB-UniRule"/>
</dbReference>
<dbReference type="GO" id="GO:0006420">
    <property type="term" value="P:arginyl-tRNA aminoacylation"/>
    <property type="evidence" value="ECO:0007669"/>
    <property type="project" value="UniProtKB-UniRule"/>
</dbReference>
<dbReference type="CDD" id="cd00671">
    <property type="entry name" value="ArgRS_core"/>
    <property type="match status" value="1"/>
</dbReference>
<dbReference type="FunFam" id="1.10.730.10:FF:000008">
    <property type="entry name" value="Arginine--tRNA ligase"/>
    <property type="match status" value="1"/>
</dbReference>
<dbReference type="FunFam" id="3.40.50.620:FF:000062">
    <property type="entry name" value="Arginine--tRNA ligase"/>
    <property type="match status" value="1"/>
</dbReference>
<dbReference type="Gene3D" id="3.30.1360.70">
    <property type="entry name" value="Arginyl tRNA synthetase N-terminal domain"/>
    <property type="match status" value="1"/>
</dbReference>
<dbReference type="Gene3D" id="3.40.50.620">
    <property type="entry name" value="HUPs"/>
    <property type="match status" value="1"/>
</dbReference>
<dbReference type="Gene3D" id="1.10.730.10">
    <property type="entry name" value="Isoleucyl-tRNA Synthetase, Domain 1"/>
    <property type="match status" value="1"/>
</dbReference>
<dbReference type="HAMAP" id="MF_00123">
    <property type="entry name" value="Arg_tRNA_synth"/>
    <property type="match status" value="1"/>
</dbReference>
<dbReference type="InterPro" id="IPR001412">
    <property type="entry name" value="aa-tRNA-synth_I_CS"/>
</dbReference>
<dbReference type="InterPro" id="IPR001278">
    <property type="entry name" value="Arg-tRNA-ligase"/>
</dbReference>
<dbReference type="InterPro" id="IPR005148">
    <property type="entry name" value="Arg-tRNA-synth_N"/>
</dbReference>
<dbReference type="InterPro" id="IPR036695">
    <property type="entry name" value="Arg-tRNA-synth_N_sf"/>
</dbReference>
<dbReference type="InterPro" id="IPR035684">
    <property type="entry name" value="ArgRS_core"/>
</dbReference>
<dbReference type="InterPro" id="IPR008909">
    <property type="entry name" value="DALR_anticod-bd"/>
</dbReference>
<dbReference type="InterPro" id="IPR014729">
    <property type="entry name" value="Rossmann-like_a/b/a_fold"/>
</dbReference>
<dbReference type="InterPro" id="IPR009080">
    <property type="entry name" value="tRNAsynth_Ia_anticodon-bd"/>
</dbReference>
<dbReference type="NCBIfam" id="TIGR00456">
    <property type="entry name" value="argS"/>
    <property type="match status" value="1"/>
</dbReference>
<dbReference type="PANTHER" id="PTHR11956:SF5">
    <property type="entry name" value="ARGININE--TRNA LIGASE, CYTOPLASMIC"/>
    <property type="match status" value="1"/>
</dbReference>
<dbReference type="PANTHER" id="PTHR11956">
    <property type="entry name" value="ARGINYL-TRNA SYNTHETASE"/>
    <property type="match status" value="1"/>
</dbReference>
<dbReference type="Pfam" id="PF03485">
    <property type="entry name" value="Arg_tRNA_synt_N"/>
    <property type="match status" value="1"/>
</dbReference>
<dbReference type="Pfam" id="PF05746">
    <property type="entry name" value="DALR_1"/>
    <property type="match status" value="1"/>
</dbReference>
<dbReference type="Pfam" id="PF00750">
    <property type="entry name" value="tRNA-synt_1d"/>
    <property type="match status" value="1"/>
</dbReference>
<dbReference type="PRINTS" id="PR01038">
    <property type="entry name" value="TRNASYNTHARG"/>
</dbReference>
<dbReference type="SMART" id="SM01016">
    <property type="entry name" value="Arg_tRNA_synt_N"/>
    <property type="match status" value="1"/>
</dbReference>
<dbReference type="SMART" id="SM00836">
    <property type="entry name" value="DALR_1"/>
    <property type="match status" value="1"/>
</dbReference>
<dbReference type="SUPFAM" id="SSF47323">
    <property type="entry name" value="Anticodon-binding domain of a subclass of class I aminoacyl-tRNA synthetases"/>
    <property type="match status" value="1"/>
</dbReference>
<dbReference type="SUPFAM" id="SSF55190">
    <property type="entry name" value="Arginyl-tRNA synthetase (ArgRS), N-terminal 'additional' domain"/>
    <property type="match status" value="1"/>
</dbReference>
<dbReference type="SUPFAM" id="SSF52374">
    <property type="entry name" value="Nucleotidylyl transferase"/>
    <property type="match status" value="1"/>
</dbReference>
<dbReference type="PROSITE" id="PS00178">
    <property type="entry name" value="AA_TRNA_LIGASE_I"/>
    <property type="match status" value="1"/>
</dbReference>
<reference key="1">
    <citation type="submission" date="2009-01" db="EMBL/GenBank/DDBJ databases">
        <title>Complete sequence of Desulfovibrio desulfuricans subsp. desulfuricans str. ATCC 27774.</title>
        <authorList>
            <consortium name="US DOE Joint Genome Institute"/>
            <person name="Lucas S."/>
            <person name="Copeland A."/>
            <person name="Lapidus A."/>
            <person name="Glavina del Rio T."/>
            <person name="Tice H."/>
            <person name="Bruce D."/>
            <person name="Goodwin L."/>
            <person name="Pitluck S."/>
            <person name="Sims D."/>
            <person name="Lu M."/>
            <person name="Kiss H."/>
            <person name="Meineke L."/>
            <person name="Brettin T."/>
            <person name="Detter J.C."/>
            <person name="Han C."/>
            <person name="Larimer F."/>
            <person name="Land M."/>
            <person name="Hauser L."/>
            <person name="Kyrpides N."/>
            <person name="Ovchinnikova G."/>
            <person name="Hazen T.C."/>
        </authorList>
    </citation>
    <scope>NUCLEOTIDE SEQUENCE [LARGE SCALE GENOMIC DNA]</scope>
    <source>
        <strain>ATCC 27774 / DSM 6949 / MB</strain>
    </source>
</reference>
<organism>
    <name type="scientific">Desulfovibrio desulfuricans (strain ATCC 27774 / DSM 6949 / MB)</name>
    <dbReference type="NCBI Taxonomy" id="525146"/>
    <lineage>
        <taxon>Bacteria</taxon>
        <taxon>Pseudomonadati</taxon>
        <taxon>Thermodesulfobacteriota</taxon>
        <taxon>Desulfovibrionia</taxon>
        <taxon>Desulfovibrionales</taxon>
        <taxon>Desulfovibrionaceae</taxon>
        <taxon>Desulfovibrio</taxon>
    </lineage>
</organism>
<evidence type="ECO:0000255" key="1">
    <source>
        <dbReference type="HAMAP-Rule" id="MF_00123"/>
    </source>
</evidence>
<comment type="catalytic activity">
    <reaction evidence="1">
        <text>tRNA(Arg) + L-arginine + ATP = L-arginyl-tRNA(Arg) + AMP + diphosphate</text>
        <dbReference type="Rhea" id="RHEA:20301"/>
        <dbReference type="Rhea" id="RHEA-COMP:9658"/>
        <dbReference type="Rhea" id="RHEA-COMP:9673"/>
        <dbReference type="ChEBI" id="CHEBI:30616"/>
        <dbReference type="ChEBI" id="CHEBI:32682"/>
        <dbReference type="ChEBI" id="CHEBI:33019"/>
        <dbReference type="ChEBI" id="CHEBI:78442"/>
        <dbReference type="ChEBI" id="CHEBI:78513"/>
        <dbReference type="ChEBI" id="CHEBI:456215"/>
        <dbReference type="EC" id="6.1.1.19"/>
    </reaction>
</comment>
<comment type="subunit">
    <text evidence="1">Monomer.</text>
</comment>
<comment type="subcellular location">
    <subcellularLocation>
        <location evidence="1">Cytoplasm</location>
    </subcellularLocation>
</comment>
<comment type="similarity">
    <text evidence="1">Belongs to the class-I aminoacyl-tRNA synthetase family.</text>
</comment>
<name>SYR_DESDA</name>
<accession>B8IYS4</accession>